<name>JZT32_CHIGU</name>
<feature type="signal peptide" evidence="2">
    <location>
        <begin position="1" status="less than"/>
        <end position="20"/>
    </location>
</feature>
<feature type="propeptide" id="PRO_0000398467" evidence="3 5">
    <location>
        <begin position="21"/>
        <end position="49"/>
    </location>
</feature>
<feature type="peptide" id="PRO_0000398468" description="U18-theraphotoxin-Cg1a" evidence="3 5">
    <location>
        <begin position="50"/>
        <end position="84"/>
    </location>
</feature>
<feature type="modified residue" description="Phenylalanine amide" evidence="3 5">
    <location>
        <position position="84"/>
    </location>
</feature>
<feature type="disulfide bond" evidence="1">
    <location>
        <begin position="51"/>
        <end position="65"/>
    </location>
</feature>
<feature type="disulfide bond" evidence="1">
    <location>
        <begin position="58"/>
        <end position="70"/>
    </location>
</feature>
<feature type="disulfide bond" evidence="1">
    <location>
        <begin position="64"/>
        <end position="78"/>
    </location>
</feature>
<feature type="non-terminal residue">
    <location>
        <position position="1"/>
    </location>
</feature>
<comment type="function">
    <text evidence="4 5">Inhibits TTX-sensitive and TTX-insensitive sodium currents (IC(50) is 0.6 uM and 0.95 uM respectively) on rat dorsal root ganglion (DRG) neurons (PubMed:18581053, PubMed:19409400). Inhibits muscular subtypes sodium channels Nav1.4/SCN4A and Nav1.5/SCN5A transiently transfected in to HEK293 cells (IC(50) is 5.42 uM and 0.45 uM respectively). Also blocks Kv2.1/KCNB1 potassium channels expressed in X.laevis oocytes with an IC(50) of 604 nM. Injection of the toxin in mice was immediately followed by general ataxia, lack of response to stimuli and semiparalysis (PubMed:19409400).</text>
</comment>
<comment type="subcellular location">
    <subcellularLocation>
        <location evidence="3">Secreted</location>
    </subcellularLocation>
</comment>
<comment type="tissue specificity">
    <text evidence="10">Expressed by the venom gland.</text>
</comment>
<comment type="domain">
    <text evidence="1">The presence of a 'disulfide through disulfide knot' structurally defines this protein as a knottin.</text>
</comment>
<comment type="mass spectrometry" mass="3951.6" method="MALDI" evidence="5">
    <text>Monoisotopic mass.</text>
</comment>
<comment type="similarity">
    <text evidence="9">Belongs to the neurotoxin 10 (Hwtx-1) family. 47 subfamily.</text>
</comment>
<comment type="sequence caution" evidence="9">
    <conflict type="erroneous initiation">
        <sequence resource="EMBL-CDS" id="ABY71705"/>
    </conflict>
    <text>Truncated N-terminus.</text>
</comment>
<dbReference type="EMBL" id="EU233886">
    <property type="protein sequence ID" value="ABY71705.1"/>
    <property type="status" value="ALT_INIT"/>
    <property type="molecule type" value="mRNA"/>
</dbReference>
<dbReference type="SMR" id="B1P1F5"/>
<dbReference type="ArachnoServer" id="AS000834">
    <property type="toxin name" value="U18-theraphotoxin-Cg1a"/>
</dbReference>
<dbReference type="GO" id="GO:0005576">
    <property type="term" value="C:extracellular region"/>
    <property type="evidence" value="ECO:0007669"/>
    <property type="project" value="UniProtKB-SubCell"/>
</dbReference>
<dbReference type="GO" id="GO:0008200">
    <property type="term" value="F:ion channel inhibitor activity"/>
    <property type="evidence" value="ECO:0007669"/>
    <property type="project" value="InterPro"/>
</dbReference>
<dbReference type="GO" id="GO:0015459">
    <property type="term" value="F:potassium channel regulator activity"/>
    <property type="evidence" value="ECO:0007669"/>
    <property type="project" value="UniProtKB-KW"/>
</dbReference>
<dbReference type="GO" id="GO:0017080">
    <property type="term" value="F:sodium channel regulator activity"/>
    <property type="evidence" value="ECO:0007669"/>
    <property type="project" value="UniProtKB-KW"/>
</dbReference>
<dbReference type="GO" id="GO:0090729">
    <property type="term" value="F:toxin activity"/>
    <property type="evidence" value="ECO:0007669"/>
    <property type="project" value="UniProtKB-KW"/>
</dbReference>
<dbReference type="InterPro" id="IPR011696">
    <property type="entry name" value="Huwentoxin-1"/>
</dbReference>
<dbReference type="Pfam" id="PF07740">
    <property type="entry name" value="Toxin_12"/>
    <property type="match status" value="1"/>
</dbReference>
<dbReference type="SUPFAM" id="SSF57059">
    <property type="entry name" value="omega toxin-like"/>
    <property type="match status" value="1"/>
</dbReference>
<proteinExistence type="evidence at protein level"/>
<organism>
    <name type="scientific">Chilobrachys guangxiensis</name>
    <name type="common">Chinese earth tiger tarantula</name>
    <name type="synonym">Chilobrachys jingzhao</name>
    <dbReference type="NCBI Taxonomy" id="278060"/>
    <lineage>
        <taxon>Eukaryota</taxon>
        <taxon>Metazoa</taxon>
        <taxon>Ecdysozoa</taxon>
        <taxon>Arthropoda</taxon>
        <taxon>Chelicerata</taxon>
        <taxon>Arachnida</taxon>
        <taxon>Araneae</taxon>
        <taxon>Mygalomorphae</taxon>
        <taxon>Theraphosidae</taxon>
        <taxon>Chilobrachys</taxon>
    </lineage>
</organism>
<sequence length="86" mass="9524">KASVLITLAVLGVMFVWTSAAELEERGSDQRDSPALIKSMAKVFQSEERECTKLLGGCTKDSECCPHLGCRKKWPYHCGWDGTFGK</sequence>
<accession>B1P1F5</accession>
<accession>P0CH44</accession>
<reference key="1">
    <citation type="journal article" date="2008" name="Cell. Mol. Life Sci.">
        <title>Molecular diversity and evolution of cystine knot toxins of the tarantula Chilobrachys jingzhao.</title>
        <authorList>
            <person name="Chen J."/>
            <person name="Deng M."/>
            <person name="He Q."/>
            <person name="Meng E."/>
            <person name="Jiang L."/>
            <person name="Liao Z."/>
            <person name="Rong M."/>
            <person name="Liang S."/>
        </authorList>
    </citation>
    <scope>NUCLEOTIDE SEQUENCE [LARGE SCALE MRNA]</scope>
    <scope>FUNCTION</scope>
    <source>
        <tissue>Venom gland</tissue>
    </source>
</reference>
<reference key="2">
    <citation type="journal article" date="2007" name="Proteomics">
        <title>Proteomic and peptidomic analysis of the venom from Chinese tarantula Chilobrachys jingzhao.</title>
        <authorList>
            <person name="Liao Z."/>
            <person name="Cao J."/>
            <person name="Li S."/>
            <person name="Yan X."/>
            <person name="Hu W."/>
            <person name="He Q."/>
            <person name="Chen J."/>
            <person name="Tang J."/>
            <person name="Xie J."/>
            <person name="Liang S."/>
        </authorList>
    </citation>
    <scope>PROTEIN SEQUENCE OF 50-84</scope>
    <scope>AMIDATION AT PHE-84</scope>
    <scope>IDENTIFICATION BY MASS SPECTROMETRY</scope>
    <scope>SUBCELLULAR LOCATION</scope>
    <source>
        <tissue>Venom</tissue>
    </source>
</reference>
<reference key="3">
    <citation type="journal article" date="2009" name="Neuropharmacology">
        <title>Jingzhaotoxin-IX, a novel gating modifier of both sodium and potassium channels from Chinese tarantula Chilobrachys jingzhao.</title>
        <authorList>
            <person name="Deng M."/>
            <person name="Kuang F."/>
            <person name="Sun Z."/>
            <person name="Tao H."/>
            <person name="Cai T."/>
            <person name="Zhong L."/>
            <person name="Chen Z."/>
            <person name="Xiao Y."/>
            <person name="Liang S."/>
        </authorList>
    </citation>
    <scope>PROTEIN SEQUENCE OF 50-84</scope>
    <scope>FUNCTION</scope>
    <scope>MASS SPECTROMETRY</scope>
    <scope>AMIDATION AT PHE-84</scope>
    <source>
        <tissue>Venom</tissue>
    </source>
</reference>
<evidence type="ECO:0000250" key="1">
    <source>
        <dbReference type="UniProtKB" id="P0C247"/>
    </source>
</evidence>
<evidence type="ECO:0000255" key="2"/>
<evidence type="ECO:0000269" key="3">
    <source>
    </source>
</evidence>
<evidence type="ECO:0000269" key="4">
    <source>
    </source>
</evidence>
<evidence type="ECO:0000269" key="5">
    <source>
    </source>
</evidence>
<evidence type="ECO:0000303" key="6">
    <source>
    </source>
</evidence>
<evidence type="ECO:0000303" key="7">
    <source>
    </source>
</evidence>
<evidence type="ECO:0000303" key="8">
    <source>
    </source>
</evidence>
<evidence type="ECO:0000305" key="9"/>
<evidence type="ECO:0000305" key="10">
    <source>
    </source>
</evidence>
<protein>
    <recommendedName>
        <fullName>U18-theraphotoxin-Cg1a</fullName>
        <shortName>U18-TRTX-Cg1a</shortName>
    </recommendedName>
    <alternativeName>
        <fullName evidence="7">Jingzhaotoxin-32</fullName>
        <shortName evidence="7">JZTX-32</shortName>
    </alternativeName>
    <alternativeName>
        <fullName evidence="9">Jingzhaotoxin-9</fullName>
        <shortName evidence="9">JzTx-9</shortName>
    </alternativeName>
    <alternativeName>
        <fullName evidence="8">Jingzhaotoxin-IX</fullName>
        <shortName evidence="8">JzTx-IX</shortName>
    </alternativeName>
    <alternativeName>
        <fullName evidence="6">Peptide F6-16.24</fullName>
    </alternativeName>
</protein>
<keyword id="KW-0027">Amidation</keyword>
<keyword id="KW-0903">Direct protein sequencing</keyword>
<keyword id="KW-1015">Disulfide bond</keyword>
<keyword id="KW-0872">Ion channel impairing toxin</keyword>
<keyword id="KW-0960">Knottin</keyword>
<keyword id="KW-0528">Neurotoxin</keyword>
<keyword id="KW-0632">Potassium channel impairing toxin</keyword>
<keyword id="KW-0964">Secreted</keyword>
<keyword id="KW-0732">Signal</keyword>
<keyword id="KW-0800">Toxin</keyword>
<keyword id="KW-1220">Voltage-gated potassium channel impairing toxin</keyword>
<keyword id="KW-0738">Voltage-gated sodium channel impairing toxin</keyword>